<protein>
    <recommendedName>
        <fullName evidence="1">Isopentenyl-diphosphate Delta-isomerase</fullName>
        <shortName evidence="1">IPP isomerase</shortName>
        <ecNumber evidence="1">5.3.3.2</ecNumber>
    </recommendedName>
    <alternativeName>
        <fullName evidence="1">IPP:DMAPP isomerase</fullName>
    </alternativeName>
    <alternativeName>
        <fullName evidence="1">Isopentenyl pyrophosphate isomerase</fullName>
    </alternativeName>
</protein>
<organism>
    <name type="scientific">Salmonella choleraesuis (strain SC-B67)</name>
    <dbReference type="NCBI Taxonomy" id="321314"/>
    <lineage>
        <taxon>Bacteria</taxon>
        <taxon>Pseudomonadati</taxon>
        <taxon>Pseudomonadota</taxon>
        <taxon>Gammaproteobacteria</taxon>
        <taxon>Enterobacterales</taxon>
        <taxon>Enterobacteriaceae</taxon>
        <taxon>Salmonella</taxon>
    </lineage>
</organism>
<reference key="1">
    <citation type="journal article" date="2005" name="Nucleic Acids Res.">
        <title>The genome sequence of Salmonella enterica serovar Choleraesuis, a highly invasive and resistant zoonotic pathogen.</title>
        <authorList>
            <person name="Chiu C.-H."/>
            <person name="Tang P."/>
            <person name="Chu C."/>
            <person name="Hu S."/>
            <person name="Bao Q."/>
            <person name="Yu J."/>
            <person name="Chou Y.-Y."/>
            <person name="Wang H.-S."/>
            <person name="Lee Y.-S."/>
        </authorList>
    </citation>
    <scope>NUCLEOTIDE SEQUENCE [LARGE SCALE GENOMIC DNA]</scope>
    <source>
        <strain>SC-B67</strain>
    </source>
</reference>
<proteinExistence type="inferred from homology"/>
<dbReference type="EC" id="5.3.3.2" evidence="1"/>
<dbReference type="EMBL" id="AE017220">
    <property type="protein sequence ID" value="AAX66885.1"/>
    <property type="molecule type" value="Genomic_DNA"/>
</dbReference>
<dbReference type="RefSeq" id="WP_000133994.1">
    <property type="nucleotide sequence ID" value="NC_006905.1"/>
</dbReference>
<dbReference type="SMR" id="Q57K77"/>
<dbReference type="KEGG" id="sec:SCH_2979"/>
<dbReference type="HOGENOM" id="CLU_060552_2_0_6"/>
<dbReference type="UniPathway" id="UPA00059">
    <property type="reaction ID" value="UER00104"/>
</dbReference>
<dbReference type="Proteomes" id="UP000000538">
    <property type="component" value="Chromosome"/>
</dbReference>
<dbReference type="GO" id="GO:0005737">
    <property type="term" value="C:cytoplasm"/>
    <property type="evidence" value="ECO:0007669"/>
    <property type="project" value="UniProtKB-SubCell"/>
</dbReference>
<dbReference type="GO" id="GO:0004452">
    <property type="term" value="F:isopentenyl-diphosphate delta-isomerase activity"/>
    <property type="evidence" value="ECO:0007669"/>
    <property type="project" value="UniProtKB-UniRule"/>
</dbReference>
<dbReference type="GO" id="GO:0046872">
    <property type="term" value="F:metal ion binding"/>
    <property type="evidence" value="ECO:0007669"/>
    <property type="project" value="UniProtKB-KW"/>
</dbReference>
<dbReference type="GO" id="GO:0050992">
    <property type="term" value="P:dimethylallyl diphosphate biosynthetic process"/>
    <property type="evidence" value="ECO:0007669"/>
    <property type="project" value="UniProtKB-UniRule"/>
</dbReference>
<dbReference type="GO" id="GO:0008299">
    <property type="term" value="P:isoprenoid biosynthetic process"/>
    <property type="evidence" value="ECO:0007669"/>
    <property type="project" value="UniProtKB-KW"/>
</dbReference>
<dbReference type="CDD" id="cd02885">
    <property type="entry name" value="NUDIX_IPP_Isomerase"/>
    <property type="match status" value="1"/>
</dbReference>
<dbReference type="FunFam" id="3.90.79.10:FF:000009">
    <property type="entry name" value="Isopentenyl-diphosphate Delta-isomerase"/>
    <property type="match status" value="1"/>
</dbReference>
<dbReference type="Gene3D" id="3.90.79.10">
    <property type="entry name" value="Nucleoside Triphosphate Pyrophosphohydrolase"/>
    <property type="match status" value="1"/>
</dbReference>
<dbReference type="HAMAP" id="MF_00202">
    <property type="entry name" value="Idi"/>
    <property type="match status" value="1"/>
</dbReference>
<dbReference type="InterPro" id="IPR056375">
    <property type="entry name" value="Idi_bact"/>
</dbReference>
<dbReference type="InterPro" id="IPR011876">
    <property type="entry name" value="IsopentenylPP_isomerase_typ1"/>
</dbReference>
<dbReference type="InterPro" id="IPR015797">
    <property type="entry name" value="NUDIX_hydrolase-like_dom_sf"/>
</dbReference>
<dbReference type="InterPro" id="IPR000086">
    <property type="entry name" value="NUDIX_hydrolase_dom"/>
</dbReference>
<dbReference type="NCBIfam" id="TIGR02150">
    <property type="entry name" value="IPP_isom_1"/>
    <property type="match status" value="1"/>
</dbReference>
<dbReference type="NCBIfam" id="NF002995">
    <property type="entry name" value="PRK03759.1"/>
    <property type="match status" value="1"/>
</dbReference>
<dbReference type="PANTHER" id="PTHR10885">
    <property type="entry name" value="ISOPENTENYL-DIPHOSPHATE DELTA-ISOMERASE"/>
    <property type="match status" value="1"/>
</dbReference>
<dbReference type="PANTHER" id="PTHR10885:SF0">
    <property type="entry name" value="ISOPENTENYL-DIPHOSPHATE DELTA-ISOMERASE"/>
    <property type="match status" value="1"/>
</dbReference>
<dbReference type="Pfam" id="PF00293">
    <property type="entry name" value="NUDIX"/>
    <property type="match status" value="1"/>
</dbReference>
<dbReference type="PIRSF" id="PIRSF018427">
    <property type="entry name" value="Isopntndiph_ism"/>
    <property type="match status" value="1"/>
</dbReference>
<dbReference type="SUPFAM" id="SSF55811">
    <property type="entry name" value="Nudix"/>
    <property type="match status" value="1"/>
</dbReference>
<dbReference type="PROSITE" id="PS51462">
    <property type="entry name" value="NUDIX"/>
    <property type="match status" value="1"/>
</dbReference>
<gene>
    <name evidence="1" type="primary">idi</name>
    <name type="ordered locus">SCH_2979</name>
</gene>
<comment type="function">
    <text evidence="1">Catalyzes the 1,3-allylic rearrangement of the homoallylic substrate isopentenyl (IPP) to its highly electrophilic allylic isomer, dimethylallyl diphosphate (DMAPP).</text>
</comment>
<comment type="catalytic activity">
    <reaction evidence="1">
        <text>isopentenyl diphosphate = dimethylallyl diphosphate</text>
        <dbReference type="Rhea" id="RHEA:23284"/>
        <dbReference type="ChEBI" id="CHEBI:57623"/>
        <dbReference type="ChEBI" id="CHEBI:128769"/>
        <dbReference type="EC" id="5.3.3.2"/>
    </reaction>
</comment>
<comment type="cofactor">
    <cofactor evidence="1">
        <name>Mg(2+)</name>
        <dbReference type="ChEBI" id="CHEBI:18420"/>
    </cofactor>
    <text evidence="1">Binds 1 Mg(2+) ion per subunit. The magnesium ion binds only when substrate is bound.</text>
</comment>
<comment type="cofactor">
    <cofactor evidence="1">
        <name>Mn(2+)</name>
        <dbReference type="ChEBI" id="CHEBI:29035"/>
    </cofactor>
    <text evidence="1">Binds 1 Mn(2+) ion per subunit.</text>
</comment>
<comment type="pathway">
    <text evidence="1">Isoprenoid biosynthesis; dimethylallyl diphosphate biosynthesis; dimethylallyl diphosphate from isopentenyl diphosphate: step 1/1.</text>
</comment>
<comment type="subunit">
    <text evidence="1">Homodimer.</text>
</comment>
<comment type="subcellular location">
    <subcellularLocation>
        <location evidence="1">Cytoplasm</location>
    </subcellularLocation>
</comment>
<comment type="similarity">
    <text evidence="1">Belongs to the IPP isomerase type 1 family.</text>
</comment>
<feature type="chain" id="PRO_0000205262" description="Isopentenyl-diphosphate Delta-isomerase">
    <location>
        <begin position="1"/>
        <end position="181"/>
    </location>
</feature>
<feature type="domain" description="Nudix hydrolase">
    <location>
        <begin position="30"/>
        <end position="164"/>
    </location>
</feature>
<feature type="active site" evidence="1">
    <location>
        <position position="67"/>
    </location>
</feature>
<feature type="active site" evidence="1">
    <location>
        <position position="116"/>
    </location>
</feature>
<feature type="binding site" evidence="1">
    <location>
        <position position="25"/>
    </location>
    <ligand>
        <name>Mn(2+)</name>
        <dbReference type="ChEBI" id="CHEBI:29035"/>
    </ligand>
</feature>
<feature type="binding site" evidence="1">
    <location>
        <position position="32"/>
    </location>
    <ligand>
        <name>Mn(2+)</name>
        <dbReference type="ChEBI" id="CHEBI:29035"/>
    </ligand>
</feature>
<feature type="binding site" evidence="1">
    <location>
        <position position="67"/>
    </location>
    <ligand>
        <name>Mg(2+)</name>
        <dbReference type="ChEBI" id="CHEBI:18420"/>
    </ligand>
</feature>
<feature type="binding site" evidence="1">
    <location>
        <position position="69"/>
    </location>
    <ligand>
        <name>Mn(2+)</name>
        <dbReference type="ChEBI" id="CHEBI:29035"/>
    </ligand>
</feature>
<feature type="binding site" evidence="1">
    <location>
        <position position="87"/>
    </location>
    <ligand>
        <name>Mg(2+)</name>
        <dbReference type="ChEBI" id="CHEBI:18420"/>
    </ligand>
</feature>
<feature type="binding site" evidence="1">
    <location>
        <position position="114"/>
    </location>
    <ligand>
        <name>Mn(2+)</name>
        <dbReference type="ChEBI" id="CHEBI:29035"/>
    </ligand>
</feature>
<feature type="binding site" evidence="1">
    <location>
        <position position="116"/>
    </location>
    <ligand>
        <name>Mn(2+)</name>
        <dbReference type="ChEBI" id="CHEBI:29035"/>
    </ligand>
</feature>
<keyword id="KW-0963">Cytoplasm</keyword>
<keyword id="KW-0413">Isomerase</keyword>
<keyword id="KW-0414">Isoprene biosynthesis</keyword>
<keyword id="KW-0460">Magnesium</keyword>
<keyword id="KW-0464">Manganese</keyword>
<keyword id="KW-0479">Metal-binding</keyword>
<sequence>MTEEHVVLLDEQDKPSGTLEKYAAHTLNTPLHLAFSCWLFNEDGQLLVTRRSLSKKAWPGVWTNSVCGHPQQGETTEEAIIRRCRFELGVEITDLTPVYPHFSYRATDPNGIVENEVCPVFAARATSVLQVNSEEVMDYQWSEFKSVWKSLLATPWAFSPWMVMQASDEQARERLLNYCQR</sequence>
<evidence type="ECO:0000255" key="1">
    <source>
        <dbReference type="HAMAP-Rule" id="MF_00202"/>
    </source>
</evidence>
<accession>Q57K77</accession>
<name>IDI_SALCH</name>